<accession>B8BAI9</accession>
<accession>A2YUZ9</accession>
<dbReference type="EMBL" id="CM000133">
    <property type="protein sequence ID" value="EAZ06910.1"/>
    <property type="status" value="ALT_SEQ"/>
    <property type="molecule type" value="Genomic_DNA"/>
</dbReference>
<dbReference type="EMBL" id="CM000133">
    <property type="protein sequence ID" value="EEC83537.1"/>
    <property type="status" value="ALT_SEQ"/>
    <property type="molecule type" value="Genomic_DNA"/>
</dbReference>
<dbReference type="SMR" id="B8BAI9"/>
<dbReference type="STRING" id="39946.B8BAI9"/>
<dbReference type="HOGENOM" id="CLU_112649_0_0_1"/>
<dbReference type="Proteomes" id="UP000007015">
    <property type="component" value="Chromosome 8"/>
</dbReference>
<dbReference type="GO" id="GO:0005739">
    <property type="term" value="C:mitochondrion"/>
    <property type="evidence" value="ECO:0007669"/>
    <property type="project" value="UniProtKB-SubCell"/>
</dbReference>
<dbReference type="GO" id="GO:0003746">
    <property type="term" value="F:translation elongation factor activity"/>
    <property type="evidence" value="ECO:0007669"/>
    <property type="project" value="UniProtKB-UniRule"/>
</dbReference>
<dbReference type="GO" id="GO:0070125">
    <property type="term" value="P:mitochondrial translational elongation"/>
    <property type="evidence" value="ECO:0007669"/>
    <property type="project" value="TreeGrafter"/>
</dbReference>
<dbReference type="CDD" id="cd14275">
    <property type="entry name" value="UBA_EF-Ts"/>
    <property type="match status" value="1"/>
</dbReference>
<dbReference type="FunFam" id="1.10.286.20:FF:000001">
    <property type="entry name" value="Elongation factor Ts"/>
    <property type="match status" value="1"/>
</dbReference>
<dbReference type="FunFam" id="1.10.8.10:FF:000001">
    <property type="entry name" value="Elongation factor Ts"/>
    <property type="match status" value="1"/>
</dbReference>
<dbReference type="FunFam" id="3.30.479.20:FF:000012">
    <property type="entry name" value="Elongation factor Ts, mitochondrial"/>
    <property type="match status" value="1"/>
</dbReference>
<dbReference type="Gene3D" id="1.10.286.20">
    <property type="match status" value="1"/>
</dbReference>
<dbReference type="Gene3D" id="1.10.8.10">
    <property type="entry name" value="DNA helicase RuvA subunit, C-terminal domain"/>
    <property type="match status" value="1"/>
</dbReference>
<dbReference type="Gene3D" id="3.30.479.20">
    <property type="entry name" value="Elongation factor Ts, dimerisation domain"/>
    <property type="match status" value="2"/>
</dbReference>
<dbReference type="HAMAP" id="MF_00050">
    <property type="entry name" value="EF_Ts"/>
    <property type="match status" value="1"/>
</dbReference>
<dbReference type="InterPro" id="IPR036402">
    <property type="entry name" value="EF-Ts_dimer_sf"/>
</dbReference>
<dbReference type="InterPro" id="IPR001816">
    <property type="entry name" value="Transl_elong_EFTs/EF1B"/>
</dbReference>
<dbReference type="InterPro" id="IPR014039">
    <property type="entry name" value="Transl_elong_EFTs/EF1B_dimer"/>
</dbReference>
<dbReference type="InterPro" id="IPR018101">
    <property type="entry name" value="Transl_elong_Ts_CS"/>
</dbReference>
<dbReference type="InterPro" id="IPR009060">
    <property type="entry name" value="UBA-like_sf"/>
</dbReference>
<dbReference type="NCBIfam" id="TIGR00116">
    <property type="entry name" value="tsf"/>
    <property type="match status" value="1"/>
</dbReference>
<dbReference type="PANTHER" id="PTHR11741">
    <property type="entry name" value="ELONGATION FACTOR TS"/>
    <property type="match status" value="1"/>
</dbReference>
<dbReference type="PANTHER" id="PTHR11741:SF0">
    <property type="entry name" value="ELONGATION FACTOR TS, MITOCHONDRIAL"/>
    <property type="match status" value="1"/>
</dbReference>
<dbReference type="Pfam" id="PF00889">
    <property type="entry name" value="EF_TS"/>
    <property type="match status" value="1"/>
</dbReference>
<dbReference type="SUPFAM" id="SSF54713">
    <property type="entry name" value="Elongation factor Ts (EF-Ts), dimerisation domain"/>
    <property type="match status" value="2"/>
</dbReference>
<dbReference type="SUPFAM" id="SSF46934">
    <property type="entry name" value="UBA-like"/>
    <property type="match status" value="1"/>
</dbReference>
<dbReference type="PROSITE" id="PS01127">
    <property type="entry name" value="EF_TS_2"/>
    <property type="match status" value="1"/>
</dbReference>
<evidence type="ECO:0000255" key="1">
    <source>
        <dbReference type="HAMAP-Rule" id="MF_03135"/>
    </source>
</evidence>
<evidence type="ECO:0000305" key="2"/>
<organism>
    <name type="scientific">Oryza sativa subsp. indica</name>
    <name type="common">Rice</name>
    <dbReference type="NCBI Taxonomy" id="39946"/>
    <lineage>
        <taxon>Eukaryota</taxon>
        <taxon>Viridiplantae</taxon>
        <taxon>Streptophyta</taxon>
        <taxon>Embryophyta</taxon>
        <taxon>Tracheophyta</taxon>
        <taxon>Spermatophyta</taxon>
        <taxon>Magnoliopsida</taxon>
        <taxon>Liliopsida</taxon>
        <taxon>Poales</taxon>
        <taxon>Poaceae</taxon>
        <taxon>BOP clade</taxon>
        <taxon>Oryzoideae</taxon>
        <taxon>Oryzeae</taxon>
        <taxon>Oryzinae</taxon>
        <taxon>Oryza</taxon>
        <taxon>Oryza sativa</taxon>
    </lineage>
</organism>
<proteinExistence type="inferred from homology"/>
<reference key="1">
    <citation type="journal article" date="2005" name="PLoS Biol.">
        <title>The genomes of Oryza sativa: a history of duplications.</title>
        <authorList>
            <person name="Yu J."/>
            <person name="Wang J."/>
            <person name="Lin W."/>
            <person name="Li S."/>
            <person name="Li H."/>
            <person name="Zhou J."/>
            <person name="Ni P."/>
            <person name="Dong W."/>
            <person name="Hu S."/>
            <person name="Zeng C."/>
            <person name="Zhang J."/>
            <person name="Zhang Y."/>
            <person name="Li R."/>
            <person name="Xu Z."/>
            <person name="Li S."/>
            <person name="Li X."/>
            <person name="Zheng H."/>
            <person name="Cong L."/>
            <person name="Lin L."/>
            <person name="Yin J."/>
            <person name="Geng J."/>
            <person name="Li G."/>
            <person name="Shi J."/>
            <person name="Liu J."/>
            <person name="Lv H."/>
            <person name="Li J."/>
            <person name="Wang J."/>
            <person name="Deng Y."/>
            <person name="Ran L."/>
            <person name="Shi X."/>
            <person name="Wang X."/>
            <person name="Wu Q."/>
            <person name="Li C."/>
            <person name="Ren X."/>
            <person name="Wang J."/>
            <person name="Wang X."/>
            <person name="Li D."/>
            <person name="Liu D."/>
            <person name="Zhang X."/>
            <person name="Ji Z."/>
            <person name="Zhao W."/>
            <person name="Sun Y."/>
            <person name="Zhang Z."/>
            <person name="Bao J."/>
            <person name="Han Y."/>
            <person name="Dong L."/>
            <person name="Ji J."/>
            <person name="Chen P."/>
            <person name="Wu S."/>
            <person name="Liu J."/>
            <person name="Xiao Y."/>
            <person name="Bu D."/>
            <person name="Tan J."/>
            <person name="Yang L."/>
            <person name="Ye C."/>
            <person name="Zhang J."/>
            <person name="Xu J."/>
            <person name="Zhou Y."/>
            <person name="Yu Y."/>
            <person name="Zhang B."/>
            <person name="Zhuang S."/>
            <person name="Wei H."/>
            <person name="Liu B."/>
            <person name="Lei M."/>
            <person name="Yu H."/>
            <person name="Li Y."/>
            <person name="Xu H."/>
            <person name="Wei S."/>
            <person name="He X."/>
            <person name="Fang L."/>
            <person name="Zhang Z."/>
            <person name="Zhang Y."/>
            <person name="Huang X."/>
            <person name="Su Z."/>
            <person name="Tong W."/>
            <person name="Li J."/>
            <person name="Tong Z."/>
            <person name="Li S."/>
            <person name="Ye J."/>
            <person name="Wang L."/>
            <person name="Fang L."/>
            <person name="Lei T."/>
            <person name="Chen C.-S."/>
            <person name="Chen H.-C."/>
            <person name="Xu Z."/>
            <person name="Li H."/>
            <person name="Huang H."/>
            <person name="Zhang F."/>
            <person name="Xu H."/>
            <person name="Li N."/>
            <person name="Zhao C."/>
            <person name="Li S."/>
            <person name="Dong L."/>
            <person name="Huang Y."/>
            <person name="Li L."/>
            <person name="Xi Y."/>
            <person name="Qi Q."/>
            <person name="Li W."/>
            <person name="Zhang B."/>
            <person name="Hu W."/>
            <person name="Zhang Y."/>
            <person name="Tian X."/>
            <person name="Jiao Y."/>
            <person name="Liang X."/>
            <person name="Jin J."/>
            <person name="Gao L."/>
            <person name="Zheng W."/>
            <person name="Hao B."/>
            <person name="Liu S.-M."/>
            <person name="Wang W."/>
            <person name="Yuan L."/>
            <person name="Cao M."/>
            <person name="McDermott J."/>
            <person name="Samudrala R."/>
            <person name="Wang J."/>
            <person name="Wong G.K.-S."/>
            <person name="Yang H."/>
        </authorList>
    </citation>
    <scope>NUCLEOTIDE SEQUENCE [LARGE SCALE GENOMIC DNA]</scope>
    <source>
        <strain>cv. 93-11</strain>
    </source>
</reference>
<protein>
    <recommendedName>
        <fullName evidence="1">Elongation factor Ts, mitochondrial</fullName>
        <shortName evidence="1">EF-Ts</shortName>
        <shortName evidence="1">EF-TsMt</shortName>
    </recommendedName>
</protein>
<feature type="transit peptide" description="Mitochondrion" evidence="1">
    <location>
        <begin position="1"/>
        <end position="50"/>
    </location>
</feature>
<feature type="chain" id="PRO_0000402326" description="Elongation factor Ts, mitochondrial">
    <location>
        <begin position="51"/>
        <end position="385"/>
    </location>
</feature>
<gene>
    <name evidence="1" type="primary">EFTS</name>
    <name type="ORF">OsI_29150/OsI_29149</name>
</gene>
<name>EFTS_ORYSI</name>
<comment type="function">
    <text evidence="1">Associates with the EF-Tu.GDP complex and induces the exchange of GDP to GTP. It remains bound to the aminoacyl-tRNA.EF-Tu.GTP complex up to the GTP hydrolysis stage on the ribosome.</text>
</comment>
<comment type="subcellular location">
    <subcellularLocation>
        <location evidence="1">Mitochondrion</location>
    </subcellularLocation>
</comment>
<comment type="similarity">
    <text evidence="1">Belongs to the EF-Ts family.</text>
</comment>
<comment type="sequence caution" evidence="2">
    <conflict type="erroneous gene model prediction">
        <sequence resource="EMBL-CDS" id="EAZ06910"/>
    </conflict>
</comment>
<comment type="sequence caution" evidence="2">
    <conflict type="erroneous gene model prediction">
        <sequence resource="EMBL-CDS" id="EEC83537"/>
    </conflict>
</comment>
<keyword id="KW-0251">Elongation factor</keyword>
<keyword id="KW-0496">Mitochondrion</keyword>
<keyword id="KW-0648">Protein biosynthesis</keyword>
<keyword id="KW-1185">Reference proteome</keyword>
<keyword id="KW-0809">Transit peptide</keyword>
<sequence>MAWSQSARKPMIGLLFRAQQHGARGYSYSAFQAHLSSSNVDQSATLLRRFSSEVPASEQMNLIKQLRERTSAPIKDVKASLVSCNWDIDAAQKDLRKRGVVLAAKKSSRTAAEGLLAIAQDEKRAAVVELNCETDFVARNDVFQYLASSLAKLALSARDPGELVFPFGPDYLEVNLNVNLDHPKLSGETTVQSAVTELAAMVGENVKFRRGFIMSTTAHGVVCSYMHTCPQPGLGRLAGLITLEAEDSNAPLDALQRVGKSIAMHIVATKPLFLSKELVSASAVENERDILRTQAESSGKSQMAMEKMVEGRLRKYFEEVVLLEQKYVVNDSTNIKSVLNDLSKEVGSKVTVGNFARMEVGEGVSKLFQQILIVTRKRKEWILSK</sequence>